<protein>
    <recommendedName>
        <fullName evidence="3">Polyphosphate:AMP phosphotransferase</fullName>
        <shortName evidence="1">PAP</shortName>
        <ecNumber evidence="2">2.7.4.33</ecNumber>
    </recommendedName>
    <alternativeName>
        <fullName evidence="3">Polyphosphate kinase PPK2</fullName>
    </alternativeName>
</protein>
<sequence>MFESAEIGHAIDDDTYEAALPSLREALLEAQIDLHEQAKRQIIVLINGIEGAGKGETVKLLSEWMDPRLIEVRTFDQQTDEELAHPPVWRYWRQLPAKGRMGIFFGNWYSQMLQGRVHGQYKDAVLDQAISGAERLEKMLCDEGALIFKFWFHLSKKQMKLRLKTLKDDPLHSWRISPLDWQQSKTYDKFVRFGERVLRRTSRDYAPWHVIEGVDANYRSLTVGRLLLEGMQAALNKVEPESSALTIGPLAIHNNERTLLDSLDLSLHLSKEDYQHELIAEQARLSGNLRDKRMKSHALVAVFEGNDAAGKGGAIRRVAAALDPRQYAIVPIAAPTQDERAQPYLWRFWRQIPARGKFTIFDRSWYGRVLVERVEGFCSESDWKRAYAEINDFEEQLTEAGVVVVKFWLAIDEQTQLERFQEREKIPFKRYKITEDDWRNRKKWPDYRQAVGDMVDRTSTEIAPWTLIEANDKRWARVKVLRTINEALEKAFARDKKK</sequence>
<gene>
    <name evidence="4" type="ordered locus">PSPTO_1640</name>
</gene>
<accession>Q886D9</accession>
<proteinExistence type="evidence at protein level"/>
<feature type="chain" id="PRO_0000442598" description="Polyphosphate:AMP phosphotransferase">
    <location>
        <begin position="1"/>
        <end position="498"/>
    </location>
</feature>
<feature type="region of interest" description="PPK2 1" evidence="3">
    <location>
        <begin position="11"/>
        <end position="234"/>
    </location>
</feature>
<feature type="region of interest" description="PPK2 2" evidence="3">
    <location>
        <begin position="269"/>
        <end position="491"/>
    </location>
</feature>
<name>PK22_PSESM</name>
<organism>
    <name type="scientific">Pseudomonas syringae pv. tomato (strain ATCC BAA-871 / DC3000)</name>
    <dbReference type="NCBI Taxonomy" id="223283"/>
    <lineage>
        <taxon>Bacteria</taxon>
        <taxon>Pseudomonadati</taxon>
        <taxon>Pseudomonadota</taxon>
        <taxon>Gammaproteobacteria</taxon>
        <taxon>Pseudomonadales</taxon>
        <taxon>Pseudomonadaceae</taxon>
        <taxon>Pseudomonas</taxon>
    </lineage>
</organism>
<evidence type="ECO:0000250" key="1">
    <source>
        <dbReference type="UniProtKB" id="Q83XD3"/>
    </source>
</evidence>
<evidence type="ECO:0000269" key="2">
    <source>
    </source>
</evidence>
<evidence type="ECO:0000305" key="3"/>
<evidence type="ECO:0000312" key="4">
    <source>
        <dbReference type="EMBL" id="AAO55160.1"/>
    </source>
</evidence>
<comment type="function">
    <text evidence="2">Uses inorganic polyphosphate (polyP) as a donor to convert AMP to ADP. Can also convert GMP to GDP, with lower efficiency.</text>
</comment>
<comment type="catalytic activity">
    <reaction evidence="2">
        <text>[phosphate](n) + ADP = [phosphate](n+1) + AMP</text>
        <dbReference type="Rhea" id="RHEA:57820"/>
        <dbReference type="Rhea" id="RHEA-COMP:9859"/>
        <dbReference type="Rhea" id="RHEA-COMP:14280"/>
        <dbReference type="ChEBI" id="CHEBI:16838"/>
        <dbReference type="ChEBI" id="CHEBI:456215"/>
        <dbReference type="ChEBI" id="CHEBI:456216"/>
        <dbReference type="EC" id="2.7.4.33"/>
    </reaction>
</comment>
<comment type="similarity">
    <text evidence="3">Belongs to the polyphosphate kinase 2 (PPK2) family. Class II subfamily.</text>
</comment>
<reference key="1">
    <citation type="journal article" date="2003" name="Proc. Natl. Acad. Sci. U.S.A.">
        <title>The complete genome sequence of the Arabidopsis and tomato pathogen Pseudomonas syringae pv. tomato DC3000.</title>
        <authorList>
            <person name="Buell C.R."/>
            <person name="Joardar V."/>
            <person name="Lindeberg M."/>
            <person name="Selengut J."/>
            <person name="Paulsen I.T."/>
            <person name="Gwinn M.L."/>
            <person name="Dodson R.J."/>
            <person name="DeBoy R.T."/>
            <person name="Durkin A.S."/>
            <person name="Kolonay J.F."/>
            <person name="Madupu R."/>
            <person name="Daugherty S.C."/>
            <person name="Brinkac L.M."/>
            <person name="Beanan M.J."/>
            <person name="Haft D.H."/>
            <person name="Nelson W.C."/>
            <person name="Davidsen T.M."/>
            <person name="Zafar N."/>
            <person name="Zhou L."/>
            <person name="Liu J."/>
            <person name="Yuan Q."/>
            <person name="Khouri H.M."/>
            <person name="Fedorova N.B."/>
            <person name="Tran B."/>
            <person name="Russell D."/>
            <person name="Berry K.J."/>
            <person name="Utterback T.R."/>
            <person name="Van Aken S.E."/>
            <person name="Feldblyum T.V."/>
            <person name="D'Ascenzo M."/>
            <person name="Deng W.-L."/>
            <person name="Ramos A.R."/>
            <person name="Alfano J.R."/>
            <person name="Cartinhour S."/>
            <person name="Chatterjee A.K."/>
            <person name="Delaney T.P."/>
            <person name="Lazarowitz S.G."/>
            <person name="Martin G.B."/>
            <person name="Schneider D.J."/>
            <person name="Tang X."/>
            <person name="Bender C.L."/>
            <person name="White O."/>
            <person name="Fraser C.M."/>
            <person name="Collmer A."/>
        </authorList>
    </citation>
    <scope>NUCLEOTIDE SEQUENCE [LARGE SCALE GENOMIC DNA]</scope>
    <source>
        <strain>ATCC BAA-871 / DC3000</strain>
    </source>
</reference>
<reference key="2">
    <citation type="journal article" date="2008" name="Proc. Natl. Acad. Sci. U.S.A.">
        <title>Polyphosphate-dependent synthesis of ATP and ADP by the family-2 polyphosphate kinases in bacteria.</title>
        <authorList>
            <person name="Nocek B."/>
            <person name="Kochinyan S."/>
            <person name="Proudfoot M."/>
            <person name="Brown G."/>
            <person name="Evdokimova E."/>
            <person name="Osipiuk J."/>
            <person name="Edwards A.M."/>
            <person name="Savchenko A."/>
            <person name="Joachimiak A."/>
            <person name="Yakunin A.F."/>
        </authorList>
    </citation>
    <scope>FUNCTION</scope>
    <scope>CATALYTIC ACTIVITY</scope>
</reference>
<keyword id="KW-0418">Kinase</keyword>
<keyword id="KW-1185">Reference proteome</keyword>
<keyword id="KW-0677">Repeat</keyword>
<keyword id="KW-0808">Transferase</keyword>
<dbReference type="EC" id="2.7.4.33" evidence="2"/>
<dbReference type="EMBL" id="AE016853">
    <property type="protein sequence ID" value="AAO55160.1"/>
    <property type="molecule type" value="Genomic_DNA"/>
</dbReference>
<dbReference type="RefSeq" id="NP_791465.1">
    <property type="nucleotide sequence ID" value="NC_004578.1"/>
</dbReference>
<dbReference type="SMR" id="Q886D9"/>
<dbReference type="STRING" id="223283.PSPTO_1640"/>
<dbReference type="GeneID" id="1183277"/>
<dbReference type="KEGG" id="pst:PSPTO_1640"/>
<dbReference type="PATRIC" id="fig|223283.9.peg.1664"/>
<dbReference type="eggNOG" id="COG2326">
    <property type="taxonomic scope" value="Bacteria"/>
</dbReference>
<dbReference type="HOGENOM" id="CLU_033786_0_2_6"/>
<dbReference type="OrthoDB" id="9775224at2"/>
<dbReference type="PhylomeDB" id="Q886D9"/>
<dbReference type="Proteomes" id="UP000002515">
    <property type="component" value="Chromosome"/>
</dbReference>
<dbReference type="GO" id="GO:0016301">
    <property type="term" value="F:kinase activity"/>
    <property type="evidence" value="ECO:0007669"/>
    <property type="project" value="UniProtKB-KW"/>
</dbReference>
<dbReference type="GO" id="GO:0043751">
    <property type="term" value="F:polyphosphate:AMP phosphotransferase activity"/>
    <property type="evidence" value="ECO:0007669"/>
    <property type="project" value="InterPro"/>
</dbReference>
<dbReference type="GO" id="GO:0006797">
    <property type="term" value="P:polyphosphate metabolic process"/>
    <property type="evidence" value="ECO:0007669"/>
    <property type="project" value="InterPro"/>
</dbReference>
<dbReference type="Gene3D" id="3.40.50.300">
    <property type="entry name" value="P-loop containing nucleotide triphosphate hydrolases"/>
    <property type="match status" value="2"/>
</dbReference>
<dbReference type="InterPro" id="IPR027417">
    <property type="entry name" value="P-loop_NTPase"/>
</dbReference>
<dbReference type="InterPro" id="IPR022489">
    <property type="entry name" value="PolyP_AMP_Tfrase"/>
</dbReference>
<dbReference type="InterPro" id="IPR022488">
    <property type="entry name" value="PPK2-related"/>
</dbReference>
<dbReference type="NCBIfam" id="TIGR03708">
    <property type="entry name" value="poly_P_AMP_trns"/>
    <property type="match status" value="1"/>
</dbReference>
<dbReference type="PANTHER" id="PTHR34383:SF3">
    <property type="entry name" value="POLYPHOSPHATE:AMP PHOSPHOTRANSFERASE"/>
    <property type="match status" value="1"/>
</dbReference>
<dbReference type="PANTHER" id="PTHR34383">
    <property type="entry name" value="POLYPHOSPHATE:AMP PHOSPHOTRANSFERASE-RELATED"/>
    <property type="match status" value="1"/>
</dbReference>
<dbReference type="Pfam" id="PF03976">
    <property type="entry name" value="PPK2"/>
    <property type="match status" value="2"/>
</dbReference>
<dbReference type="SUPFAM" id="SSF52540">
    <property type="entry name" value="P-loop containing nucleoside triphosphate hydrolases"/>
    <property type="match status" value="2"/>
</dbReference>